<organism>
    <name type="scientific">Prochlorococcus marinus (strain MIT 9515)</name>
    <dbReference type="NCBI Taxonomy" id="167542"/>
    <lineage>
        <taxon>Bacteria</taxon>
        <taxon>Bacillati</taxon>
        <taxon>Cyanobacteriota</taxon>
        <taxon>Cyanophyceae</taxon>
        <taxon>Synechococcales</taxon>
        <taxon>Prochlorococcaceae</taxon>
        <taxon>Prochlorococcus</taxon>
    </lineage>
</organism>
<evidence type="ECO:0000255" key="1">
    <source>
        <dbReference type="HAMAP-Rule" id="MF_00183"/>
    </source>
</evidence>
<sequence length="409" mass="45041">MKYITVLGSTGSIGTQTLEIVRELPNKFKVVALSAGRNIDLLTEQVSQHKPEVIAIDDENLLTDLKNNINNLGISNPPIVLGGREAINSVAAWDSADTVITGIVGCAGLIPTMSAIKASKNIALANKETLIAAGSVVIPALKENKSRLLPADSEHSAIFQCIQGLPNYENADFVTGQIPNGLKAIHLTASGGAFRDWAVEDLKNVTVEDATSHPNWSMGRKITVDSATLMNKGLEVIEAHYLFGTPYQNIEIVIHPQSIIHSMIEMEDSSVLAQLGWPDMKLPILYAMSWPERFRTNWKRFNLTEIGQLTFKKPDEVKYPCMGLAYSAGKCSGTMPAVLNAANEMAVDQFLKEKISFQEIPTFINKTCEAHINKLNLNPNLEDILEVDNWARIFVQEEIKKGKKYINVE</sequence>
<proteinExistence type="inferred from homology"/>
<keyword id="KW-0414">Isoprene biosynthesis</keyword>
<keyword id="KW-0464">Manganese</keyword>
<keyword id="KW-0479">Metal-binding</keyword>
<keyword id="KW-0521">NADP</keyword>
<keyword id="KW-0560">Oxidoreductase</keyword>
<comment type="function">
    <text evidence="1">Catalyzes the NADPH-dependent rearrangement and reduction of 1-deoxy-D-xylulose-5-phosphate (DXP) to 2-C-methyl-D-erythritol 4-phosphate (MEP).</text>
</comment>
<comment type="catalytic activity">
    <reaction evidence="1">
        <text>2-C-methyl-D-erythritol 4-phosphate + NADP(+) = 1-deoxy-D-xylulose 5-phosphate + NADPH + H(+)</text>
        <dbReference type="Rhea" id="RHEA:13717"/>
        <dbReference type="ChEBI" id="CHEBI:15378"/>
        <dbReference type="ChEBI" id="CHEBI:57783"/>
        <dbReference type="ChEBI" id="CHEBI:57792"/>
        <dbReference type="ChEBI" id="CHEBI:58262"/>
        <dbReference type="ChEBI" id="CHEBI:58349"/>
        <dbReference type="EC" id="1.1.1.267"/>
    </reaction>
    <physiologicalReaction direction="right-to-left" evidence="1">
        <dbReference type="Rhea" id="RHEA:13719"/>
    </physiologicalReaction>
</comment>
<comment type="cofactor">
    <cofactor evidence="1">
        <name>Mg(2+)</name>
        <dbReference type="ChEBI" id="CHEBI:18420"/>
    </cofactor>
    <cofactor evidence="1">
        <name>Mn(2+)</name>
        <dbReference type="ChEBI" id="CHEBI:29035"/>
    </cofactor>
</comment>
<comment type="pathway">
    <text evidence="1">Isoprenoid biosynthesis; isopentenyl diphosphate biosynthesis via DXP pathway; isopentenyl diphosphate from 1-deoxy-D-xylulose 5-phosphate: step 1/6.</text>
</comment>
<comment type="similarity">
    <text evidence="1">Belongs to the DXR family.</text>
</comment>
<accession>A2BXK2</accession>
<dbReference type="EC" id="1.1.1.267" evidence="1"/>
<dbReference type="EMBL" id="CP000552">
    <property type="protein sequence ID" value="ABM72513.1"/>
    <property type="molecule type" value="Genomic_DNA"/>
</dbReference>
<dbReference type="RefSeq" id="WP_011820612.1">
    <property type="nucleotide sequence ID" value="NC_008817.1"/>
</dbReference>
<dbReference type="SMR" id="A2BXK2"/>
<dbReference type="STRING" id="167542.P9515_13061"/>
<dbReference type="GeneID" id="60201837"/>
<dbReference type="KEGG" id="pmc:P9515_13061"/>
<dbReference type="eggNOG" id="COG0743">
    <property type="taxonomic scope" value="Bacteria"/>
</dbReference>
<dbReference type="HOGENOM" id="CLU_035714_4_0_3"/>
<dbReference type="OrthoDB" id="9806546at2"/>
<dbReference type="UniPathway" id="UPA00056">
    <property type="reaction ID" value="UER00092"/>
</dbReference>
<dbReference type="Proteomes" id="UP000001589">
    <property type="component" value="Chromosome"/>
</dbReference>
<dbReference type="GO" id="GO:0030604">
    <property type="term" value="F:1-deoxy-D-xylulose-5-phosphate reductoisomerase activity"/>
    <property type="evidence" value="ECO:0007669"/>
    <property type="project" value="UniProtKB-UniRule"/>
</dbReference>
<dbReference type="GO" id="GO:0030145">
    <property type="term" value="F:manganese ion binding"/>
    <property type="evidence" value="ECO:0007669"/>
    <property type="project" value="TreeGrafter"/>
</dbReference>
<dbReference type="GO" id="GO:0070402">
    <property type="term" value="F:NADPH binding"/>
    <property type="evidence" value="ECO:0007669"/>
    <property type="project" value="InterPro"/>
</dbReference>
<dbReference type="GO" id="GO:0051484">
    <property type="term" value="P:isopentenyl diphosphate biosynthetic process, methylerythritol 4-phosphate pathway involved in terpenoid biosynthetic process"/>
    <property type="evidence" value="ECO:0007669"/>
    <property type="project" value="TreeGrafter"/>
</dbReference>
<dbReference type="FunFam" id="3.40.50.720:FF:000045">
    <property type="entry name" value="1-deoxy-D-xylulose 5-phosphate reductoisomerase"/>
    <property type="match status" value="1"/>
</dbReference>
<dbReference type="Gene3D" id="1.10.1740.10">
    <property type="match status" value="1"/>
</dbReference>
<dbReference type="Gene3D" id="3.40.50.720">
    <property type="entry name" value="NAD(P)-binding Rossmann-like Domain"/>
    <property type="match status" value="1"/>
</dbReference>
<dbReference type="HAMAP" id="MF_00183">
    <property type="entry name" value="DXP_reductoisom"/>
    <property type="match status" value="1"/>
</dbReference>
<dbReference type="InterPro" id="IPR003821">
    <property type="entry name" value="DXP_reductoisomerase"/>
</dbReference>
<dbReference type="InterPro" id="IPR013644">
    <property type="entry name" value="DXP_reductoisomerase_C"/>
</dbReference>
<dbReference type="InterPro" id="IPR013512">
    <property type="entry name" value="DXP_reductoisomerase_N"/>
</dbReference>
<dbReference type="InterPro" id="IPR026877">
    <property type="entry name" value="DXPR_C"/>
</dbReference>
<dbReference type="InterPro" id="IPR036169">
    <property type="entry name" value="DXPR_C_sf"/>
</dbReference>
<dbReference type="InterPro" id="IPR036291">
    <property type="entry name" value="NAD(P)-bd_dom_sf"/>
</dbReference>
<dbReference type="NCBIfam" id="TIGR00243">
    <property type="entry name" value="Dxr"/>
    <property type="match status" value="1"/>
</dbReference>
<dbReference type="NCBIfam" id="NF009114">
    <property type="entry name" value="PRK12464.1"/>
    <property type="match status" value="1"/>
</dbReference>
<dbReference type="PANTHER" id="PTHR30525">
    <property type="entry name" value="1-DEOXY-D-XYLULOSE 5-PHOSPHATE REDUCTOISOMERASE"/>
    <property type="match status" value="1"/>
</dbReference>
<dbReference type="PANTHER" id="PTHR30525:SF0">
    <property type="entry name" value="1-DEOXY-D-XYLULOSE 5-PHOSPHATE REDUCTOISOMERASE, CHLOROPLASTIC"/>
    <property type="match status" value="1"/>
</dbReference>
<dbReference type="Pfam" id="PF08436">
    <property type="entry name" value="DXP_redisom_C"/>
    <property type="match status" value="1"/>
</dbReference>
<dbReference type="Pfam" id="PF02670">
    <property type="entry name" value="DXP_reductoisom"/>
    <property type="match status" value="1"/>
</dbReference>
<dbReference type="Pfam" id="PF13288">
    <property type="entry name" value="DXPR_C"/>
    <property type="match status" value="1"/>
</dbReference>
<dbReference type="PIRSF" id="PIRSF006205">
    <property type="entry name" value="Dxp_reductismrs"/>
    <property type="match status" value="1"/>
</dbReference>
<dbReference type="SUPFAM" id="SSF69055">
    <property type="entry name" value="1-deoxy-D-xylulose-5-phosphate reductoisomerase, C-terminal domain"/>
    <property type="match status" value="1"/>
</dbReference>
<dbReference type="SUPFAM" id="SSF55347">
    <property type="entry name" value="Glyceraldehyde-3-phosphate dehydrogenase-like, C-terminal domain"/>
    <property type="match status" value="1"/>
</dbReference>
<dbReference type="SUPFAM" id="SSF51735">
    <property type="entry name" value="NAD(P)-binding Rossmann-fold domains"/>
    <property type="match status" value="1"/>
</dbReference>
<gene>
    <name evidence="1" type="primary">dxr</name>
    <name type="ordered locus">P9515_13061</name>
</gene>
<protein>
    <recommendedName>
        <fullName evidence="1">1-deoxy-D-xylulose 5-phosphate reductoisomerase</fullName>
        <shortName evidence="1">DXP reductoisomerase</shortName>
        <ecNumber evidence="1">1.1.1.267</ecNumber>
    </recommendedName>
    <alternativeName>
        <fullName evidence="1">1-deoxyxylulose-5-phosphate reductoisomerase</fullName>
    </alternativeName>
    <alternativeName>
        <fullName evidence="1">2-C-methyl-D-erythritol 4-phosphate synthase</fullName>
    </alternativeName>
</protein>
<feature type="chain" id="PRO_1000020287" description="1-deoxy-D-xylulose 5-phosphate reductoisomerase">
    <location>
        <begin position="1"/>
        <end position="409"/>
    </location>
</feature>
<feature type="binding site" evidence="1">
    <location>
        <position position="10"/>
    </location>
    <ligand>
        <name>NADPH</name>
        <dbReference type="ChEBI" id="CHEBI:57783"/>
    </ligand>
</feature>
<feature type="binding site" evidence="1">
    <location>
        <position position="11"/>
    </location>
    <ligand>
        <name>NADPH</name>
        <dbReference type="ChEBI" id="CHEBI:57783"/>
    </ligand>
</feature>
<feature type="binding site" evidence="1">
    <location>
        <position position="12"/>
    </location>
    <ligand>
        <name>NADPH</name>
        <dbReference type="ChEBI" id="CHEBI:57783"/>
    </ligand>
</feature>
<feature type="binding site" evidence="1">
    <location>
        <position position="13"/>
    </location>
    <ligand>
        <name>NADPH</name>
        <dbReference type="ChEBI" id="CHEBI:57783"/>
    </ligand>
</feature>
<feature type="binding site" evidence="1">
    <location>
        <position position="36"/>
    </location>
    <ligand>
        <name>NADPH</name>
        <dbReference type="ChEBI" id="CHEBI:57783"/>
    </ligand>
</feature>
<feature type="binding site" evidence="1">
    <location>
        <position position="37"/>
    </location>
    <ligand>
        <name>NADPH</name>
        <dbReference type="ChEBI" id="CHEBI:57783"/>
    </ligand>
</feature>
<feature type="binding site" evidence="1">
    <location>
        <position position="38"/>
    </location>
    <ligand>
        <name>NADPH</name>
        <dbReference type="ChEBI" id="CHEBI:57783"/>
    </ligand>
</feature>
<feature type="binding site" evidence="1">
    <location>
        <position position="126"/>
    </location>
    <ligand>
        <name>NADPH</name>
        <dbReference type="ChEBI" id="CHEBI:57783"/>
    </ligand>
</feature>
<feature type="binding site" evidence="1">
    <location>
        <position position="127"/>
    </location>
    <ligand>
        <name>1-deoxy-D-xylulose 5-phosphate</name>
        <dbReference type="ChEBI" id="CHEBI:57792"/>
    </ligand>
</feature>
<feature type="binding site" evidence="1">
    <location>
        <position position="128"/>
    </location>
    <ligand>
        <name>NADPH</name>
        <dbReference type="ChEBI" id="CHEBI:57783"/>
    </ligand>
</feature>
<feature type="binding site" evidence="1">
    <location>
        <position position="152"/>
    </location>
    <ligand>
        <name>Mn(2+)</name>
        <dbReference type="ChEBI" id="CHEBI:29035"/>
    </ligand>
</feature>
<feature type="binding site" evidence="1">
    <location>
        <position position="153"/>
    </location>
    <ligand>
        <name>1-deoxy-D-xylulose 5-phosphate</name>
        <dbReference type="ChEBI" id="CHEBI:57792"/>
    </ligand>
</feature>
<feature type="binding site" evidence="1">
    <location>
        <position position="154"/>
    </location>
    <ligand>
        <name>1-deoxy-D-xylulose 5-phosphate</name>
        <dbReference type="ChEBI" id="CHEBI:57792"/>
    </ligand>
</feature>
<feature type="binding site" evidence="1">
    <location>
        <position position="154"/>
    </location>
    <ligand>
        <name>Mn(2+)</name>
        <dbReference type="ChEBI" id="CHEBI:29035"/>
    </ligand>
</feature>
<feature type="binding site" evidence="1">
    <location>
        <position position="190"/>
    </location>
    <ligand>
        <name>1-deoxy-D-xylulose 5-phosphate</name>
        <dbReference type="ChEBI" id="CHEBI:57792"/>
    </ligand>
</feature>
<feature type="binding site" evidence="1">
    <location>
        <position position="213"/>
    </location>
    <ligand>
        <name>1-deoxy-D-xylulose 5-phosphate</name>
        <dbReference type="ChEBI" id="CHEBI:57792"/>
    </ligand>
</feature>
<feature type="binding site" evidence="1">
    <location>
        <position position="219"/>
    </location>
    <ligand>
        <name>NADPH</name>
        <dbReference type="ChEBI" id="CHEBI:57783"/>
    </ligand>
</feature>
<feature type="binding site" evidence="1">
    <location>
        <position position="226"/>
    </location>
    <ligand>
        <name>1-deoxy-D-xylulose 5-phosphate</name>
        <dbReference type="ChEBI" id="CHEBI:57792"/>
    </ligand>
</feature>
<feature type="binding site" evidence="1">
    <location>
        <position position="231"/>
    </location>
    <ligand>
        <name>1-deoxy-D-xylulose 5-phosphate</name>
        <dbReference type="ChEBI" id="CHEBI:57792"/>
    </ligand>
</feature>
<feature type="binding site" evidence="1">
    <location>
        <position position="232"/>
    </location>
    <ligand>
        <name>1-deoxy-D-xylulose 5-phosphate</name>
        <dbReference type="ChEBI" id="CHEBI:57792"/>
    </ligand>
</feature>
<feature type="binding site" evidence="1">
    <location>
        <position position="235"/>
    </location>
    <ligand>
        <name>1-deoxy-D-xylulose 5-phosphate</name>
        <dbReference type="ChEBI" id="CHEBI:57792"/>
    </ligand>
</feature>
<feature type="binding site" evidence="1">
    <location>
        <position position="235"/>
    </location>
    <ligand>
        <name>Mn(2+)</name>
        <dbReference type="ChEBI" id="CHEBI:29035"/>
    </ligand>
</feature>
<reference key="1">
    <citation type="journal article" date="2007" name="PLoS Genet.">
        <title>Patterns and implications of gene gain and loss in the evolution of Prochlorococcus.</title>
        <authorList>
            <person name="Kettler G.C."/>
            <person name="Martiny A.C."/>
            <person name="Huang K."/>
            <person name="Zucker J."/>
            <person name="Coleman M.L."/>
            <person name="Rodrigue S."/>
            <person name="Chen F."/>
            <person name="Lapidus A."/>
            <person name="Ferriera S."/>
            <person name="Johnson J."/>
            <person name="Steglich C."/>
            <person name="Church G.M."/>
            <person name="Richardson P."/>
            <person name="Chisholm S.W."/>
        </authorList>
    </citation>
    <scope>NUCLEOTIDE SEQUENCE [LARGE SCALE GENOMIC DNA]</scope>
    <source>
        <strain>MIT 9515</strain>
    </source>
</reference>
<name>DXR_PROM5</name>